<reference key="1">
    <citation type="submission" date="2004-04" db="EMBL/GenBank/DDBJ databases">
        <authorList>
            <consortium name="NIH - Xenopus Gene Collection (XGC) project"/>
        </authorList>
    </citation>
    <scope>NUCLEOTIDE SEQUENCE [LARGE SCALE MRNA]</scope>
    <source>
        <tissue>Embryo</tissue>
    </source>
</reference>
<proteinExistence type="evidence at transcript level"/>
<sequence length="1138" mass="129843">MASEETSLRALESLMSEFFHNVTSNERKREIESLLNNFAQQLGAWRFCFYFLSESHNDYVLMYSLSVFENLINKMWLGVPSQEKMQIRSSLPKLLLSQHKSLPSFICNKLCKVIVDMGRQDWPMFYHDFFTNILQLIQTPSTTPLGLIMLKTASEELACPREDLSVARKEELRKLLLEQVPTVLGLLTGVLESIWDKHSITAATPPPSPTASDTDDLLSNLIHTPNLTKQLSQPPPSLEAESERVCALALECLSHLFSWIPLSASITPSLLTTIFHFARLGCDARSRHTTSVTTNTTSSVVNGGSSSPPLHSAAPTRDRGRLGVLAMSCINELMCKNCVPLEFQEYLLRVCQQTFYLLQRITRETNAHSVRNRLEELDESYVEKFTDFLRLFVSVHLRRIESNAQFPVVEFLSLLFKYTFHQPSHEGYLSCLDIWALFLDYLTNKIRNRLEDREAIIGRYEDALVLLLTEVLNRIQFRFNQTQLEELDDETLDDDQQTEWQRYLRHSLEVVAKIMELLPTHAFSTLFAALQENLEVYLGLQRCLVTNGNDQRLNVTAENDCRRLHCSLRDLSSLLQAVGRLAEYFIGDVFGARFNDALRVVERLVEVTLYGSRIKLYNMETAVPSVLKPDLIDVHAQSLAALQAYSHWLARYYSEVQRQNPEQFISIISTAMEALPPLISSKVQEKLLLSACHLLVSIATTVRPVFLINIPAVQKVFSRITDGSAQRLPEEAQVLLCRALSNVLLLPWPNVPEGEQQWGERSSHHANLLNALTRDYRLLKGSSPPQRKGQLEATKRVICQTLGVLRDVVENISGEGTKSRQTCYQSLHESSQLSLALFPAYIHQSDVTEEMLSFFLALFQGLRVQMGAPFTEQIIQTFLNMFTREQLAESILQEGSAGCHVVEKFLKILQVVVQEPGQAFKPFLPSILSLCMEQLYPIIAERPSPDVKAELFELLFQLLHHNWRYFYRSSVLASVHRDGSDEPMENQAQFIVVMQAFGQSFLQPDIHIFRQNLSYLETLNSKHKLYHKKLFQTVMLPQFVSVLLQVLIHKSHDLLQEEIGIAVYNMASVDFSTFFSAFLPEFLTGCQGLDTSQKSVLARNFKMERDLPSFTQSVHRLVNDLRYYRLCNDSLPPGTVKL</sequence>
<feature type="chain" id="PRO_0000235304" description="Exportin-6-B">
    <location>
        <begin position="1"/>
        <end position="1138"/>
    </location>
</feature>
<feature type="domain" description="Importin N-terminal" evidence="3">
    <location>
        <begin position="31"/>
        <end position="97"/>
    </location>
</feature>
<feature type="region of interest" description="Disordered" evidence="4">
    <location>
        <begin position="291"/>
        <end position="315"/>
    </location>
</feature>
<feature type="compositionally biased region" description="Low complexity" evidence="4">
    <location>
        <begin position="291"/>
        <end position="307"/>
    </location>
</feature>
<keyword id="KW-0963">Cytoplasm</keyword>
<keyword id="KW-0539">Nucleus</keyword>
<keyword id="KW-0653">Protein transport</keyword>
<keyword id="KW-1185">Reference proteome</keyword>
<keyword id="KW-0813">Transport</keyword>
<comment type="function">
    <text evidence="1">Mediates the nuclear export of actin and profilin-actin complexes in somatic cells. Oocyte nuclei lack active actin export (By similarity).</text>
</comment>
<comment type="function">
    <text evidence="2">Mediates the nuclear export of actin and profilin-actin complexes in somatic cells.</text>
</comment>
<comment type="subcellular location">
    <subcellularLocation>
        <location evidence="2">Nucleus</location>
    </subcellularLocation>
    <subcellularLocation>
        <location evidence="2">Cytoplasm</location>
    </subcellularLocation>
    <text evidence="2">Shuttles between the nucleus and the cytoplasm.</text>
</comment>
<comment type="similarity">
    <text evidence="5">Belongs to the exportin family.</text>
</comment>
<protein>
    <recommendedName>
        <fullName>Exportin-6-B</fullName>
    </recommendedName>
</protein>
<name>XPO6B_XENLA</name>
<accession>Q6NTZ5</accession>
<dbReference type="EMBL" id="BC068807">
    <property type="protein sequence ID" value="AAH68807.1"/>
    <property type="molecule type" value="mRNA"/>
</dbReference>
<dbReference type="SMR" id="Q6NTZ5"/>
<dbReference type="DNASU" id="414567"/>
<dbReference type="GeneID" id="414567"/>
<dbReference type="KEGG" id="xla:414567"/>
<dbReference type="AGR" id="Xenbase:XB-GENE-866274"/>
<dbReference type="CTD" id="414567"/>
<dbReference type="Xenbase" id="XB-GENE-866274">
    <property type="gene designation" value="xpo6.L"/>
</dbReference>
<dbReference type="OMA" id="KITRFNH"/>
<dbReference type="OrthoDB" id="10261013at2759"/>
<dbReference type="Proteomes" id="UP000186698">
    <property type="component" value="Chromosome 9_10L"/>
</dbReference>
<dbReference type="Bgee" id="414567">
    <property type="expression patterns" value="Expressed in egg cell and 19 other cell types or tissues"/>
</dbReference>
<dbReference type="GO" id="GO:0005737">
    <property type="term" value="C:cytoplasm"/>
    <property type="evidence" value="ECO:0007669"/>
    <property type="project" value="UniProtKB-SubCell"/>
</dbReference>
<dbReference type="GO" id="GO:0005634">
    <property type="term" value="C:nucleus"/>
    <property type="evidence" value="ECO:0007669"/>
    <property type="project" value="UniProtKB-SubCell"/>
</dbReference>
<dbReference type="GO" id="GO:0005049">
    <property type="term" value="F:nuclear export signal receptor activity"/>
    <property type="evidence" value="ECO:0007669"/>
    <property type="project" value="InterPro"/>
</dbReference>
<dbReference type="GO" id="GO:0031267">
    <property type="term" value="F:small GTPase binding"/>
    <property type="evidence" value="ECO:0007669"/>
    <property type="project" value="InterPro"/>
</dbReference>
<dbReference type="GO" id="GO:0006611">
    <property type="term" value="P:protein export from nucleus"/>
    <property type="evidence" value="ECO:0000250"/>
    <property type="project" value="UniProtKB"/>
</dbReference>
<dbReference type="FunFam" id="1.25.10.10:FF:000147">
    <property type="entry name" value="exportin-6 isoform X2"/>
    <property type="match status" value="1"/>
</dbReference>
<dbReference type="Gene3D" id="1.25.10.10">
    <property type="entry name" value="Leucine-rich Repeat Variant"/>
    <property type="match status" value="1"/>
</dbReference>
<dbReference type="InterPro" id="IPR011989">
    <property type="entry name" value="ARM-like"/>
</dbReference>
<dbReference type="InterPro" id="IPR016024">
    <property type="entry name" value="ARM-type_fold"/>
</dbReference>
<dbReference type="InterPro" id="IPR013598">
    <property type="entry name" value="Exportin-1/Importin-b-like"/>
</dbReference>
<dbReference type="InterPro" id="IPR001494">
    <property type="entry name" value="Importin-beta_N"/>
</dbReference>
<dbReference type="InterPro" id="IPR040016">
    <property type="entry name" value="XPO6"/>
</dbReference>
<dbReference type="PANTHER" id="PTHR21452">
    <property type="entry name" value="EXPORTIN-6"/>
    <property type="match status" value="1"/>
</dbReference>
<dbReference type="PANTHER" id="PTHR21452:SF4">
    <property type="entry name" value="EXPORTIN-6"/>
    <property type="match status" value="1"/>
</dbReference>
<dbReference type="Pfam" id="PF03810">
    <property type="entry name" value="IBN_N"/>
    <property type="match status" value="1"/>
</dbReference>
<dbReference type="Pfam" id="PF08389">
    <property type="entry name" value="Xpo1"/>
    <property type="match status" value="1"/>
</dbReference>
<dbReference type="SMART" id="SM00913">
    <property type="entry name" value="IBN_N"/>
    <property type="match status" value="1"/>
</dbReference>
<dbReference type="SUPFAM" id="SSF48371">
    <property type="entry name" value="ARM repeat"/>
    <property type="match status" value="1"/>
</dbReference>
<dbReference type="PROSITE" id="PS50166">
    <property type="entry name" value="IMPORTIN_B_NT"/>
    <property type="match status" value="1"/>
</dbReference>
<evidence type="ECO:0000250" key="1"/>
<evidence type="ECO:0000250" key="2">
    <source>
        <dbReference type="UniProtKB" id="Q53I77"/>
    </source>
</evidence>
<evidence type="ECO:0000255" key="3">
    <source>
        <dbReference type="PROSITE-ProRule" id="PRU00115"/>
    </source>
</evidence>
<evidence type="ECO:0000256" key="4">
    <source>
        <dbReference type="SAM" id="MobiDB-lite"/>
    </source>
</evidence>
<evidence type="ECO:0000305" key="5"/>
<gene>
    <name type="primary">xpo6-b</name>
</gene>
<organism>
    <name type="scientific">Xenopus laevis</name>
    <name type="common">African clawed frog</name>
    <dbReference type="NCBI Taxonomy" id="8355"/>
    <lineage>
        <taxon>Eukaryota</taxon>
        <taxon>Metazoa</taxon>
        <taxon>Chordata</taxon>
        <taxon>Craniata</taxon>
        <taxon>Vertebrata</taxon>
        <taxon>Euteleostomi</taxon>
        <taxon>Amphibia</taxon>
        <taxon>Batrachia</taxon>
        <taxon>Anura</taxon>
        <taxon>Pipoidea</taxon>
        <taxon>Pipidae</taxon>
        <taxon>Xenopodinae</taxon>
        <taxon>Xenopus</taxon>
        <taxon>Xenopus</taxon>
    </lineage>
</organism>